<proteinExistence type="inferred from homology"/>
<comment type="function">
    <text evidence="1">Functions as a docking protein to recruit essential components of the viral replication machinery to viral DNA origins. In the presence of the major DNA-binding protein, opens dsDNA leading to a conformational change in the origin that facilitates DNA unwinding and subsequent replication (By similarity).</text>
</comment>
<comment type="subunit">
    <text evidence="1">Homodimer. Interacts with the major DNA-binding protein. Interacts with the DNA helicase/primase complex-associated protein and the polymerase accessory protein (By similarity).</text>
</comment>
<comment type="subcellular location">
    <subcellularLocation>
        <location evidence="4">Host nucleus</location>
    </subcellularLocation>
</comment>
<comment type="similarity">
    <text evidence="4">Belongs to the herpesviridae OriBP family.</text>
</comment>
<organismHost>
    <name type="scientific">Equus caballus</name>
    <name type="common">Horse</name>
    <dbReference type="NCBI Taxonomy" id="9796"/>
</organismHost>
<feature type="chain" id="PRO_0000115868" description="Replication origin-binding protein">
    <location>
        <begin position="1"/>
        <end position="887"/>
    </location>
</feature>
<feature type="domain" description="Helicase ATP-binding" evidence="2">
    <location>
        <begin position="93"/>
        <end position="258"/>
    </location>
</feature>
<feature type="region of interest" description="Disordered" evidence="3">
    <location>
        <begin position="1"/>
        <end position="28"/>
    </location>
</feature>
<feature type="binding site" evidence="2">
    <location>
        <begin position="106"/>
        <end position="113"/>
    </location>
    <ligand>
        <name>ATP</name>
        <dbReference type="ChEBI" id="CHEBI:30616"/>
    </ligand>
</feature>
<name>OBP_EHV1B</name>
<keyword id="KW-0067">ATP-binding</keyword>
<keyword id="KW-0235">DNA replication</keyword>
<keyword id="KW-0238">DNA-binding</keyword>
<keyword id="KW-1048">Host nucleus</keyword>
<keyword id="KW-0547">Nucleotide-binding</keyword>
<keyword id="KW-1185">Reference proteome</keyword>
<protein>
    <recommendedName>
        <fullName>Replication origin-binding protein</fullName>
    </recommendedName>
    <alternativeName>
        <fullName>OriBP</fullName>
        <shortName>OBP</shortName>
    </alternativeName>
</protein>
<sequence length="887" mass="97276">MPSIGPIPTIPDEGSRGSSATAAPRRAMASYRDTTLGGRAEGVAFSAVEDSYTSSVSLARMLYGGDLEEWVRHTRPGVSLEIQSRAPVRFPPPNNPSSRRVTVVRAPMGSGKTTALLKWLGEALDAPDISALVVSCRRSFTRTLAKRFNDAELPGFATYFTSTDYTMAGEPFRRLLVQIESLHRVDDNLLNNYDILVLDEVMSTIGQLYSPTMVHLNKVDALLTRLLKTCPRVIAMDATANAQLVDFLASARGERSVHVIINSFAAPGFSQRDGTLLRTLGTDVLRAALGFVLVDDENGTKVMETDSRPISARLREVNSAGFFGRLMDRLVAGRNVCVFSSTVSFSEIVARFCSQFTDSILVLNSLRPSEDVAFWGGVRVLIYTTVVTVGLSFDTAHFHSMFAYVKPMSHGPDMVSVYQSLGRVRELIHNELLVYVDSSGARAEPIFTPMLLNHVVSRQGGWPAEFSQVTDALCCQFKARCGPAYRTASTRGLALFVRFKYKHFFERCTLASVGDSINILYTLLESNQMRVAIEGCQFPLTAAGFCDFLQDLRLDAYAARKEIKQLRGPGGIAATPTEVFENDDVAVFIQKYLRPGVAHDEILALLVELNSPIVREQFVNVAVLGACLRLPAALESPEVFAGVYKHYASGVVPVISDAGALESVSITPDVNVLARWDLYKSCTRHARDLAWDPSRGGSGLDMSEDFITNTLSADYNRFQSLLVEIAKCNVTPLEMLAAGAVRGVTTALSGRPKSRVPLSKGEHAVSLFKVLWEDVFGAKLAKSTQTFPGGVRVKNLRKDEIVALLESVNVNHSECKTHRELYALLMCNRKLFAGPRYKLRAPKWSRNLCFLELDNTGTCKTPLDAALADLAPSAWPQVYGAVDFDAL</sequence>
<organism>
    <name type="scientific">Equine herpesvirus 1 (strain Ab4p)</name>
    <name type="common">EHV-1</name>
    <name type="synonym">Equine abortion virus</name>
    <dbReference type="NCBI Taxonomy" id="31520"/>
    <lineage>
        <taxon>Viruses</taxon>
        <taxon>Duplodnaviria</taxon>
        <taxon>Heunggongvirae</taxon>
        <taxon>Peploviricota</taxon>
        <taxon>Herviviricetes</taxon>
        <taxon>Herpesvirales</taxon>
        <taxon>Orthoherpesviridae</taxon>
        <taxon>Alphaherpesvirinae</taxon>
        <taxon>Varicellovirus</taxon>
        <taxon>Varicellovirus equidalpha1</taxon>
        <taxon>Equid alphaherpesvirus 1</taxon>
    </lineage>
</organism>
<evidence type="ECO:0000250" key="1"/>
<evidence type="ECO:0000255" key="2">
    <source>
        <dbReference type="PROSITE-ProRule" id="PRU00541"/>
    </source>
</evidence>
<evidence type="ECO:0000256" key="3">
    <source>
        <dbReference type="SAM" id="MobiDB-lite"/>
    </source>
</evidence>
<evidence type="ECO:0000305" key="4"/>
<dbReference type="EMBL" id="AY665713">
    <property type="protein sequence ID" value="AAT67310.1"/>
    <property type="molecule type" value="Genomic_DNA"/>
</dbReference>
<dbReference type="PIR" id="H36800">
    <property type="entry name" value="WZBEE5"/>
</dbReference>
<dbReference type="KEGG" id="vg:2948557"/>
<dbReference type="Proteomes" id="UP000001189">
    <property type="component" value="Segment"/>
</dbReference>
<dbReference type="GO" id="GO:0042025">
    <property type="term" value="C:host cell nucleus"/>
    <property type="evidence" value="ECO:0007669"/>
    <property type="project" value="UniProtKB-SubCell"/>
</dbReference>
<dbReference type="GO" id="GO:0005524">
    <property type="term" value="F:ATP binding"/>
    <property type="evidence" value="ECO:0007669"/>
    <property type="project" value="UniProtKB-KW"/>
</dbReference>
<dbReference type="GO" id="GO:0003688">
    <property type="term" value="F:DNA replication origin binding"/>
    <property type="evidence" value="ECO:0007669"/>
    <property type="project" value="InterPro"/>
</dbReference>
<dbReference type="GO" id="GO:0006260">
    <property type="term" value="P:DNA replication"/>
    <property type="evidence" value="ECO:0007669"/>
    <property type="project" value="UniProtKB-KW"/>
</dbReference>
<dbReference type="Gene3D" id="3.40.50.300">
    <property type="entry name" value="P-loop containing nucleotide triphosphate hydrolases"/>
    <property type="match status" value="1"/>
</dbReference>
<dbReference type="InterPro" id="IPR014001">
    <property type="entry name" value="Helicase_ATP-bd"/>
</dbReference>
<dbReference type="InterPro" id="IPR027417">
    <property type="entry name" value="P-loop_NTPase"/>
</dbReference>
<dbReference type="InterPro" id="IPR003450">
    <property type="entry name" value="Replication_origin-bd"/>
</dbReference>
<dbReference type="Pfam" id="PF02399">
    <property type="entry name" value="Herpes_ori_bp"/>
    <property type="match status" value="1"/>
</dbReference>
<dbReference type="SMART" id="SM00487">
    <property type="entry name" value="DEXDc"/>
    <property type="match status" value="1"/>
</dbReference>
<dbReference type="SUPFAM" id="SSF52540">
    <property type="entry name" value="P-loop containing nucleoside triphosphate hydrolases"/>
    <property type="match status" value="1"/>
</dbReference>
<dbReference type="PROSITE" id="PS51192">
    <property type="entry name" value="HELICASE_ATP_BIND_1"/>
    <property type="match status" value="1"/>
</dbReference>
<reference key="1">
    <citation type="journal article" date="1992" name="Virology">
        <title>The DNA sequence of equine herpesvirus-1.</title>
        <authorList>
            <person name="Telford E.A.R."/>
            <person name="Watson M.S."/>
            <person name="McBride K."/>
            <person name="Davison A.J."/>
        </authorList>
    </citation>
    <scope>NUCLEOTIDE SEQUENCE [LARGE SCALE GENOMIC DNA]</scope>
</reference>
<gene>
    <name type="ordered locus">53</name>
</gene>
<accession>P28947</accession>
<accession>Q6S6V1</accession>